<feature type="chain" id="PRO_1000081408" description="Probable transaldolase">
    <location>
        <begin position="1"/>
        <end position="215"/>
    </location>
</feature>
<feature type="active site" description="Schiff-base intermediate with substrate" evidence="1">
    <location>
        <position position="83"/>
    </location>
</feature>
<name>TAL_CLOK5</name>
<keyword id="KW-0963">Cytoplasm</keyword>
<keyword id="KW-0570">Pentose shunt</keyword>
<keyword id="KW-1185">Reference proteome</keyword>
<keyword id="KW-0704">Schiff base</keyword>
<keyword id="KW-0808">Transferase</keyword>
<dbReference type="EC" id="2.2.1.2" evidence="1"/>
<dbReference type="EMBL" id="CP000673">
    <property type="protein sequence ID" value="EDK33040.1"/>
    <property type="molecule type" value="Genomic_DNA"/>
</dbReference>
<dbReference type="SMR" id="A5N6V9"/>
<dbReference type="STRING" id="431943.CKL_0998"/>
<dbReference type="KEGG" id="ckl:CKL_0998"/>
<dbReference type="eggNOG" id="COG0176">
    <property type="taxonomic scope" value="Bacteria"/>
</dbReference>
<dbReference type="HOGENOM" id="CLU_079764_0_0_9"/>
<dbReference type="UniPathway" id="UPA00115">
    <property type="reaction ID" value="UER00414"/>
</dbReference>
<dbReference type="Proteomes" id="UP000002411">
    <property type="component" value="Chromosome"/>
</dbReference>
<dbReference type="GO" id="GO:0005737">
    <property type="term" value="C:cytoplasm"/>
    <property type="evidence" value="ECO:0007669"/>
    <property type="project" value="UniProtKB-SubCell"/>
</dbReference>
<dbReference type="GO" id="GO:0016832">
    <property type="term" value="F:aldehyde-lyase activity"/>
    <property type="evidence" value="ECO:0007669"/>
    <property type="project" value="InterPro"/>
</dbReference>
<dbReference type="GO" id="GO:0004801">
    <property type="term" value="F:transaldolase activity"/>
    <property type="evidence" value="ECO:0007669"/>
    <property type="project" value="UniProtKB-UniRule"/>
</dbReference>
<dbReference type="GO" id="GO:0005975">
    <property type="term" value="P:carbohydrate metabolic process"/>
    <property type="evidence" value="ECO:0007669"/>
    <property type="project" value="InterPro"/>
</dbReference>
<dbReference type="GO" id="GO:0006098">
    <property type="term" value="P:pentose-phosphate shunt"/>
    <property type="evidence" value="ECO:0007669"/>
    <property type="project" value="UniProtKB-UniRule"/>
</dbReference>
<dbReference type="CDD" id="cd00956">
    <property type="entry name" value="Transaldolase_FSA"/>
    <property type="match status" value="1"/>
</dbReference>
<dbReference type="FunFam" id="3.20.20.70:FF:000018">
    <property type="entry name" value="Probable transaldolase"/>
    <property type="match status" value="1"/>
</dbReference>
<dbReference type="Gene3D" id="3.20.20.70">
    <property type="entry name" value="Aldolase class I"/>
    <property type="match status" value="1"/>
</dbReference>
<dbReference type="HAMAP" id="MF_00494">
    <property type="entry name" value="Transaldolase_3b"/>
    <property type="match status" value="1"/>
</dbReference>
<dbReference type="InterPro" id="IPR013785">
    <property type="entry name" value="Aldolase_TIM"/>
</dbReference>
<dbReference type="InterPro" id="IPR001585">
    <property type="entry name" value="TAL/FSA"/>
</dbReference>
<dbReference type="InterPro" id="IPR022999">
    <property type="entry name" value="Transaldolase_3B"/>
</dbReference>
<dbReference type="InterPro" id="IPR004731">
    <property type="entry name" value="Transaldolase_3B/F6P_aldolase"/>
</dbReference>
<dbReference type="InterPro" id="IPR018225">
    <property type="entry name" value="Transaldolase_AS"/>
</dbReference>
<dbReference type="InterPro" id="IPR033919">
    <property type="entry name" value="TSA/FSA_arc/bac"/>
</dbReference>
<dbReference type="NCBIfam" id="TIGR00875">
    <property type="entry name" value="fsa_talC_mipB"/>
    <property type="match status" value="1"/>
</dbReference>
<dbReference type="PANTHER" id="PTHR10683">
    <property type="entry name" value="TRANSALDOLASE"/>
    <property type="match status" value="1"/>
</dbReference>
<dbReference type="PANTHER" id="PTHR10683:SF36">
    <property type="entry name" value="TRANSALDOLASE"/>
    <property type="match status" value="1"/>
</dbReference>
<dbReference type="Pfam" id="PF00923">
    <property type="entry name" value="TAL_FSA"/>
    <property type="match status" value="1"/>
</dbReference>
<dbReference type="SUPFAM" id="SSF51569">
    <property type="entry name" value="Aldolase"/>
    <property type="match status" value="1"/>
</dbReference>
<dbReference type="PROSITE" id="PS01054">
    <property type="entry name" value="TRANSALDOLASE_1"/>
    <property type="match status" value="1"/>
</dbReference>
<dbReference type="PROSITE" id="PS00958">
    <property type="entry name" value="TRANSALDOLASE_2"/>
    <property type="match status" value="1"/>
</dbReference>
<sequence length="215" mass="23644">MKLFIDTANVDEIRKANDMGIICGVTTNPSLIAKEGRNFKEVVKEITDIVDGPISAEVISLEWKEMVKEARELVKIHKNIVIKIPMTQEGLKAVKVLSQEEIKTNVTLIFSAAQALLAAKAGASYVSPFLGRLDDVGMDGIKLIEEIVTIFKVQNIVTEIIAASIRGPIHVVKCAALGSHIATVPYKVLVQMCKHPLTDIGIERFLKDWESVPDK</sequence>
<comment type="function">
    <text evidence="1">Transaldolase is important for the balance of metabolites in the pentose-phosphate pathway.</text>
</comment>
<comment type="catalytic activity">
    <reaction evidence="1">
        <text>D-sedoheptulose 7-phosphate + D-glyceraldehyde 3-phosphate = D-erythrose 4-phosphate + beta-D-fructose 6-phosphate</text>
        <dbReference type="Rhea" id="RHEA:17053"/>
        <dbReference type="ChEBI" id="CHEBI:16897"/>
        <dbReference type="ChEBI" id="CHEBI:57483"/>
        <dbReference type="ChEBI" id="CHEBI:57634"/>
        <dbReference type="ChEBI" id="CHEBI:59776"/>
        <dbReference type="EC" id="2.2.1.2"/>
    </reaction>
</comment>
<comment type="pathway">
    <text evidence="1">Carbohydrate degradation; pentose phosphate pathway; D-glyceraldehyde 3-phosphate and beta-D-fructose 6-phosphate from D-ribose 5-phosphate and D-xylulose 5-phosphate (non-oxidative stage): step 2/3.</text>
</comment>
<comment type="subcellular location">
    <subcellularLocation>
        <location evidence="1">Cytoplasm</location>
    </subcellularLocation>
</comment>
<comment type="similarity">
    <text evidence="1">Belongs to the transaldolase family. Type 3B subfamily.</text>
</comment>
<accession>A5N6V9</accession>
<reference key="1">
    <citation type="journal article" date="2008" name="Proc. Natl. Acad. Sci. U.S.A.">
        <title>The genome of Clostridium kluyveri, a strict anaerobe with unique metabolic features.</title>
        <authorList>
            <person name="Seedorf H."/>
            <person name="Fricke W.F."/>
            <person name="Veith B."/>
            <person name="Brueggemann H."/>
            <person name="Liesegang H."/>
            <person name="Strittmatter A."/>
            <person name="Miethke M."/>
            <person name="Buckel W."/>
            <person name="Hinderberger J."/>
            <person name="Li F."/>
            <person name="Hagemeier C."/>
            <person name="Thauer R.K."/>
            <person name="Gottschalk G."/>
        </authorList>
    </citation>
    <scope>NUCLEOTIDE SEQUENCE [LARGE SCALE GENOMIC DNA]</scope>
    <source>
        <strain>ATCC 8527 / DSM 555 / NBRC 12016 / NCIMB 10680 / K1</strain>
    </source>
</reference>
<proteinExistence type="inferred from homology"/>
<organism>
    <name type="scientific">Clostridium kluyveri (strain ATCC 8527 / DSM 555 / NBRC 12016 / NCIMB 10680 / K1)</name>
    <dbReference type="NCBI Taxonomy" id="431943"/>
    <lineage>
        <taxon>Bacteria</taxon>
        <taxon>Bacillati</taxon>
        <taxon>Bacillota</taxon>
        <taxon>Clostridia</taxon>
        <taxon>Eubacteriales</taxon>
        <taxon>Clostridiaceae</taxon>
        <taxon>Clostridium</taxon>
    </lineage>
</organism>
<gene>
    <name evidence="1" type="primary">tal</name>
    <name type="ordered locus">CKL_0998</name>
</gene>
<evidence type="ECO:0000255" key="1">
    <source>
        <dbReference type="HAMAP-Rule" id="MF_00494"/>
    </source>
</evidence>
<protein>
    <recommendedName>
        <fullName evidence="1">Probable transaldolase</fullName>
        <ecNumber evidence="1">2.2.1.2</ecNumber>
    </recommendedName>
</protein>